<comment type="function">
    <text evidence="1">As part of the heme biosynthetic pathway, catalyzes the sequential polymerization of four molecules of porphobilinogen to form hydroxymethylbilane, also known as preuroporphyrinogen. Catalysis begins with the assembly of the dipyrromethane cofactor by the apoenzyme from two molecules of porphobilinogen or from preuroporphyrinogen. The covalently linked cofactor acts as a primer, around which the tetrapyrrole product is assembled. In the last step of catalysis, the product, preuroporphyrinogen, is released, leaving the cofactor bound to the holodeaminase intact.</text>
</comment>
<comment type="catalytic activity">
    <reaction evidence="1">
        <text>4 porphobilinogen + H2O = hydroxymethylbilane + 4 NH4(+)</text>
        <dbReference type="Rhea" id="RHEA:13185"/>
        <dbReference type="ChEBI" id="CHEBI:15377"/>
        <dbReference type="ChEBI" id="CHEBI:28938"/>
        <dbReference type="ChEBI" id="CHEBI:57845"/>
        <dbReference type="ChEBI" id="CHEBI:58126"/>
        <dbReference type="EC" id="2.5.1.61"/>
    </reaction>
    <physiologicalReaction direction="left-to-right" evidence="1">
        <dbReference type="Rhea" id="RHEA:13186"/>
    </physiologicalReaction>
</comment>
<comment type="cofactor">
    <cofactor evidence="1">
        <name>dipyrromethane</name>
        <dbReference type="ChEBI" id="CHEBI:60342"/>
    </cofactor>
    <text evidence="1">Binds 1 dipyrromethane group covalently.</text>
</comment>
<comment type="pathway">
    <text evidence="1">Porphyrin-containing compound metabolism; protoporphyrin-IX biosynthesis; coproporphyrinogen-III from 5-aminolevulinate: step 2/4.</text>
</comment>
<comment type="subunit">
    <text evidence="1">Monomer.</text>
</comment>
<comment type="subcellular location">
    <subcellularLocation>
        <location evidence="2">Cytoplasm</location>
        <location evidence="2">Cytosol</location>
    </subcellularLocation>
</comment>
<comment type="similarity">
    <text evidence="3">Belongs to the HMBS family.</text>
</comment>
<organism>
    <name type="scientific">Bos taurus</name>
    <name type="common">Bovine</name>
    <dbReference type="NCBI Taxonomy" id="9913"/>
    <lineage>
        <taxon>Eukaryota</taxon>
        <taxon>Metazoa</taxon>
        <taxon>Chordata</taxon>
        <taxon>Craniata</taxon>
        <taxon>Vertebrata</taxon>
        <taxon>Euteleostomi</taxon>
        <taxon>Mammalia</taxon>
        <taxon>Eutheria</taxon>
        <taxon>Laurasiatheria</taxon>
        <taxon>Artiodactyla</taxon>
        <taxon>Ruminantia</taxon>
        <taxon>Pecora</taxon>
        <taxon>Bovidae</taxon>
        <taxon>Bovinae</taxon>
        <taxon>Bos</taxon>
    </lineage>
</organism>
<keyword id="KW-0007">Acetylation</keyword>
<keyword id="KW-0963">Cytoplasm</keyword>
<keyword id="KW-0350">Heme biosynthesis</keyword>
<keyword id="KW-0597">Phosphoprotein</keyword>
<keyword id="KW-0627">Porphyrin biosynthesis</keyword>
<keyword id="KW-1185">Reference proteome</keyword>
<keyword id="KW-0808">Transferase</keyword>
<sequence length="361" mass="39515">MSGNGNAAAIAEEDTPKMRVIRVGTRKSQLARIQTDSVVATLKALYPGLQFEIIAMSTTGDKILDTALSKIGEKSLFTKELEHALERNEVDLVVHSLKDLPTVLPPGFTIGAVCKRESPYDAVVFHPKFVGKTLETLPEKSVVGTSSLRRAAQLQRKFPHLEFKSIRGNLNTRLRKLDELQEFSAIILATAGLQRMGWQNRVGQILHPEECMYAVGQGALGVEVRAKDQDILDLVGVLHDPETLLRCIAERSFLRHLEGGCSVPVAVHTAIKDGQLYLTGGVWSLNGAETMQDTMQTTIHVPVQHEDGPEDDPQLVGITARNIPRQPQLAAENLGISLATLLLNKGAKNILDVARQLNEAH</sequence>
<accession>Q2KIN5</accession>
<evidence type="ECO:0000250" key="1">
    <source>
        <dbReference type="UniProtKB" id="P08397"/>
    </source>
</evidence>
<evidence type="ECO:0000250" key="2">
    <source>
        <dbReference type="UniProtKB" id="P22907"/>
    </source>
</evidence>
<evidence type="ECO:0000305" key="3"/>
<reference key="1">
    <citation type="submission" date="2006-01" db="EMBL/GenBank/DDBJ databases">
        <authorList>
            <consortium name="NIH - Mammalian Gene Collection (MGC) project"/>
        </authorList>
    </citation>
    <scope>NUCLEOTIDE SEQUENCE [LARGE SCALE MRNA]</scope>
    <source>
        <strain>Hereford</strain>
        <tissue>Testis</tissue>
    </source>
</reference>
<gene>
    <name type="primary">HMBS</name>
</gene>
<name>HEM3_BOVIN</name>
<proteinExistence type="evidence at transcript level"/>
<protein>
    <recommendedName>
        <fullName evidence="3">Porphobilinogen deaminase</fullName>
        <ecNumber evidence="1">2.5.1.61</ecNumber>
    </recommendedName>
    <alternativeName>
        <fullName>Hydroxymethylbilane synthase</fullName>
        <shortName>HMBS</shortName>
    </alternativeName>
</protein>
<feature type="initiator methionine" description="Removed" evidence="1">
    <location>
        <position position="1"/>
    </location>
</feature>
<feature type="chain" id="PRO_0000244405" description="Porphobilinogen deaminase">
    <location>
        <begin position="2"/>
        <end position="361"/>
    </location>
</feature>
<feature type="modified residue" description="N-acetylserine" evidence="1">
    <location>
        <position position="2"/>
    </location>
</feature>
<feature type="modified residue" description="Phosphoserine" evidence="1">
    <location>
        <position position="69"/>
    </location>
</feature>
<feature type="modified residue" description="N6-acetyllysine" evidence="2">
    <location>
        <position position="74"/>
    </location>
</feature>
<feature type="modified residue" description="Phosphoserine" evidence="1">
    <location>
        <position position="147"/>
    </location>
</feature>
<feature type="modified residue" description="S-(dipyrrolylmethanemethyl)cysteine" evidence="1">
    <location>
        <position position="261"/>
    </location>
</feature>
<dbReference type="EC" id="2.5.1.61" evidence="1"/>
<dbReference type="EMBL" id="BC112573">
    <property type="protein sequence ID" value="AAI12574.1"/>
    <property type="molecule type" value="mRNA"/>
</dbReference>
<dbReference type="RefSeq" id="NP_001039672.1">
    <property type="nucleotide sequence ID" value="NM_001046207.1"/>
</dbReference>
<dbReference type="SMR" id="Q2KIN5"/>
<dbReference type="FunCoup" id="Q2KIN5">
    <property type="interactions" value="1521"/>
</dbReference>
<dbReference type="STRING" id="9913.ENSBTAP00000007052"/>
<dbReference type="PaxDb" id="9913-ENSBTAP00000007052"/>
<dbReference type="Ensembl" id="ENSBTAT00000007052.5">
    <property type="protein sequence ID" value="ENSBTAP00000007052.4"/>
    <property type="gene ID" value="ENSBTAG00000005364.6"/>
</dbReference>
<dbReference type="GeneID" id="515614"/>
<dbReference type="KEGG" id="bta:515614"/>
<dbReference type="CTD" id="3145"/>
<dbReference type="VEuPathDB" id="HostDB:ENSBTAG00000005364"/>
<dbReference type="VGNC" id="VGNC:29870">
    <property type="gene designation" value="HMBS"/>
</dbReference>
<dbReference type="eggNOG" id="KOG2892">
    <property type="taxonomic scope" value="Eukaryota"/>
</dbReference>
<dbReference type="GeneTree" id="ENSGT00390000009083"/>
<dbReference type="HOGENOM" id="CLU_019704_0_1_1"/>
<dbReference type="InParanoid" id="Q2KIN5"/>
<dbReference type="OMA" id="LWQANHI"/>
<dbReference type="OrthoDB" id="564646at2759"/>
<dbReference type="TreeFam" id="TF105389"/>
<dbReference type="Reactome" id="R-BTA-189451">
    <property type="pathway name" value="Heme biosynthesis"/>
</dbReference>
<dbReference type="UniPathway" id="UPA00251">
    <property type="reaction ID" value="UER00319"/>
</dbReference>
<dbReference type="Proteomes" id="UP000009136">
    <property type="component" value="Chromosome 15"/>
</dbReference>
<dbReference type="Bgee" id="ENSBTAG00000005364">
    <property type="expression patterns" value="Expressed in longissimus thoracis muscle and 107 other cell types or tissues"/>
</dbReference>
<dbReference type="GO" id="GO:0005737">
    <property type="term" value="C:cytoplasm"/>
    <property type="evidence" value="ECO:0000318"/>
    <property type="project" value="GO_Central"/>
</dbReference>
<dbReference type="GO" id="GO:0005829">
    <property type="term" value="C:cytosol"/>
    <property type="evidence" value="ECO:0007669"/>
    <property type="project" value="UniProtKB-SubCell"/>
</dbReference>
<dbReference type="GO" id="GO:0004418">
    <property type="term" value="F:hydroxymethylbilane synthase activity"/>
    <property type="evidence" value="ECO:0000318"/>
    <property type="project" value="GO_Central"/>
</dbReference>
<dbReference type="GO" id="GO:0006784">
    <property type="term" value="P:heme A biosynthetic process"/>
    <property type="evidence" value="ECO:0007669"/>
    <property type="project" value="Ensembl"/>
</dbReference>
<dbReference type="GO" id="GO:0006785">
    <property type="term" value="P:heme B biosynthetic process"/>
    <property type="evidence" value="ECO:0007669"/>
    <property type="project" value="Ensembl"/>
</dbReference>
<dbReference type="GO" id="GO:0006783">
    <property type="term" value="P:heme biosynthetic process"/>
    <property type="evidence" value="ECO:0000318"/>
    <property type="project" value="GO_Central"/>
</dbReference>
<dbReference type="GO" id="GO:0048034">
    <property type="term" value="P:heme O biosynthetic process"/>
    <property type="evidence" value="ECO:0007669"/>
    <property type="project" value="Ensembl"/>
</dbReference>
<dbReference type="GO" id="GO:0006782">
    <property type="term" value="P:protoporphyrinogen IX biosynthetic process"/>
    <property type="evidence" value="ECO:0007669"/>
    <property type="project" value="UniProtKB-UniPathway"/>
</dbReference>
<dbReference type="CDD" id="cd13645">
    <property type="entry name" value="PBP2_HuPBGD_like"/>
    <property type="match status" value="1"/>
</dbReference>
<dbReference type="FunFam" id="3.40.190.10:FF:000260">
    <property type="entry name" value="Porphobilinogen deaminase"/>
    <property type="match status" value="1"/>
</dbReference>
<dbReference type="FunFam" id="3.30.160.40:FF:000003">
    <property type="entry name" value="porphobilinogen deaminase isoform X1"/>
    <property type="match status" value="1"/>
</dbReference>
<dbReference type="FunFam" id="3.40.190.10:FF:000216">
    <property type="entry name" value="Porphobilinogen deaminase, variant"/>
    <property type="match status" value="1"/>
</dbReference>
<dbReference type="Gene3D" id="3.40.190.10">
    <property type="entry name" value="Periplasmic binding protein-like II"/>
    <property type="match status" value="2"/>
</dbReference>
<dbReference type="Gene3D" id="3.30.160.40">
    <property type="entry name" value="Porphobilinogen deaminase, C-terminal domain"/>
    <property type="match status" value="1"/>
</dbReference>
<dbReference type="HAMAP" id="MF_00260">
    <property type="entry name" value="Porphobil_deam"/>
    <property type="match status" value="1"/>
</dbReference>
<dbReference type="InterPro" id="IPR000860">
    <property type="entry name" value="HemC"/>
</dbReference>
<dbReference type="InterPro" id="IPR022419">
    <property type="entry name" value="Porphobilin_deaminase_cofac_BS"/>
</dbReference>
<dbReference type="InterPro" id="IPR022417">
    <property type="entry name" value="Porphobilin_deaminase_N"/>
</dbReference>
<dbReference type="InterPro" id="IPR022418">
    <property type="entry name" value="Porphobilinogen_deaminase_C"/>
</dbReference>
<dbReference type="InterPro" id="IPR036803">
    <property type="entry name" value="Porphobilinogen_deaminase_C_sf"/>
</dbReference>
<dbReference type="NCBIfam" id="TIGR00212">
    <property type="entry name" value="hemC"/>
    <property type="match status" value="1"/>
</dbReference>
<dbReference type="PANTHER" id="PTHR11557">
    <property type="entry name" value="PORPHOBILINOGEN DEAMINASE"/>
    <property type="match status" value="1"/>
</dbReference>
<dbReference type="PANTHER" id="PTHR11557:SF0">
    <property type="entry name" value="PORPHOBILINOGEN DEAMINASE"/>
    <property type="match status" value="1"/>
</dbReference>
<dbReference type="Pfam" id="PF01379">
    <property type="entry name" value="Porphobil_deam"/>
    <property type="match status" value="1"/>
</dbReference>
<dbReference type="Pfam" id="PF03900">
    <property type="entry name" value="Porphobil_deamC"/>
    <property type="match status" value="1"/>
</dbReference>
<dbReference type="PIRSF" id="PIRSF001438">
    <property type="entry name" value="4pyrrol_synth_OHMeBilane_synth"/>
    <property type="match status" value="1"/>
</dbReference>
<dbReference type="PRINTS" id="PR00151">
    <property type="entry name" value="PORPHBDMNASE"/>
</dbReference>
<dbReference type="SUPFAM" id="SSF53850">
    <property type="entry name" value="Periplasmic binding protein-like II"/>
    <property type="match status" value="1"/>
</dbReference>
<dbReference type="SUPFAM" id="SSF54782">
    <property type="entry name" value="Porphobilinogen deaminase (hydroxymethylbilane synthase), C-terminal domain"/>
    <property type="match status" value="1"/>
</dbReference>
<dbReference type="PROSITE" id="PS00533">
    <property type="entry name" value="PORPHOBILINOGEN_DEAM"/>
    <property type="match status" value="1"/>
</dbReference>